<proteinExistence type="evidence at protein level"/>
<sequence length="353" mass="39718">MAMTLLEDWCRGMDVNSQRALLVWGIPVNCDETEIEETLQAAMPQVSYRVLGRMFWREENAKAALLELTGAVDYSLIPREMPGKGGLWKVVFKPPTSDAVFLERLHLFLAREGWTVQDVARVLGFQNPAPAPGPEMPAEMLNYILDNVIQPLVESIWYKKLTLFSGKDIPGPGEETFDSWLEHSNEIIEEWQVSDIEKRRRLMESLRGPAADVIRILKTNNAAITTAECLKALEQVFGSVESSRDAQVRFLNTYQNPGEKLSSYVIRLEPLLQKVVDKGVIDKDNVNQARLEQVIAGANHSGALRRQLWLAGAEEGPAPNLFQLLVQIREEEAKKEEEEAEAALLQLGLEGHF</sequence>
<comment type="subcellular location">
    <subcellularLocation>
        <location evidence="1">Nucleus</location>
        <location evidence="1">Nucleolus</location>
    </subcellularLocation>
</comment>
<comment type="tissue specificity">
    <text evidence="2">Predominantly expressed in testis. Very low levels in the brain, including in the piriform cortex, hippocampus and some subcortical nuclei.</text>
</comment>
<comment type="similarity">
    <text evidence="3">Belongs to the PNMA family.</text>
</comment>
<name>PNMA1_MOUSE</name>
<dbReference type="EMBL" id="AK017476">
    <property type="protein sequence ID" value="BAB30762.1"/>
    <property type="molecule type" value="mRNA"/>
</dbReference>
<dbReference type="EMBL" id="AK028331">
    <property type="protein sequence ID" value="BAC25885.1"/>
    <property type="molecule type" value="mRNA"/>
</dbReference>
<dbReference type="EMBL" id="AK136933">
    <property type="protein sequence ID" value="BAE23177.1"/>
    <property type="molecule type" value="mRNA"/>
</dbReference>
<dbReference type="EMBL" id="CH466590">
    <property type="protein sequence ID" value="EDL02765.1"/>
    <property type="molecule type" value="Genomic_DNA"/>
</dbReference>
<dbReference type="EMBL" id="BC116687">
    <property type="protein sequence ID" value="AAI16688.1"/>
    <property type="molecule type" value="mRNA"/>
</dbReference>
<dbReference type="EMBL" id="BC116688">
    <property type="protein sequence ID" value="AAI16689.1"/>
    <property type="molecule type" value="mRNA"/>
</dbReference>
<dbReference type="CCDS" id="CCDS26040.1"/>
<dbReference type="RefSeq" id="NP_081714.2">
    <property type="nucleotide sequence ID" value="NM_027438.3"/>
</dbReference>
<dbReference type="SMR" id="Q8C1C8"/>
<dbReference type="BioGRID" id="214084">
    <property type="interactions" value="1"/>
</dbReference>
<dbReference type="FunCoup" id="Q8C1C8">
    <property type="interactions" value="1334"/>
</dbReference>
<dbReference type="STRING" id="10090.ENSMUSP00000060783"/>
<dbReference type="PhosphoSitePlus" id="Q8C1C8"/>
<dbReference type="PaxDb" id="10090-ENSMUSP00000060783"/>
<dbReference type="ProteomicsDB" id="289637"/>
<dbReference type="Antibodypedia" id="26">
    <property type="antibodies" value="194 antibodies from 26 providers"/>
</dbReference>
<dbReference type="DNASU" id="70481"/>
<dbReference type="Ensembl" id="ENSMUST00000061425.3">
    <property type="protein sequence ID" value="ENSMUSP00000060783.3"/>
    <property type="gene ID" value="ENSMUSG00000054383.3"/>
</dbReference>
<dbReference type="GeneID" id="70481"/>
<dbReference type="KEGG" id="mmu:70481"/>
<dbReference type="UCSC" id="uc007oel.1">
    <property type="organism name" value="mouse"/>
</dbReference>
<dbReference type="AGR" id="MGI:2180564"/>
<dbReference type="CTD" id="9240"/>
<dbReference type="MGI" id="MGI:2180564">
    <property type="gene designation" value="Pnma1"/>
</dbReference>
<dbReference type="VEuPathDB" id="HostDB:ENSMUSG00000054383"/>
<dbReference type="eggNOG" id="ENOG502SPHT">
    <property type="taxonomic scope" value="Eukaryota"/>
</dbReference>
<dbReference type="GeneTree" id="ENSGT01030000234522"/>
<dbReference type="HOGENOM" id="CLU_014694_0_0_1"/>
<dbReference type="InParanoid" id="Q8C1C8"/>
<dbReference type="OMA" id="EHTNEVM"/>
<dbReference type="OrthoDB" id="115435at2759"/>
<dbReference type="PhylomeDB" id="Q8C1C8"/>
<dbReference type="TreeFam" id="TF335054"/>
<dbReference type="BioGRID-ORCS" id="70481">
    <property type="hits" value="1 hit in 76 CRISPR screens"/>
</dbReference>
<dbReference type="PRO" id="PR:Q8C1C8"/>
<dbReference type="Proteomes" id="UP000000589">
    <property type="component" value="Chromosome 12"/>
</dbReference>
<dbReference type="RNAct" id="Q8C1C8">
    <property type="molecule type" value="protein"/>
</dbReference>
<dbReference type="Bgee" id="ENSMUSG00000054383">
    <property type="expression patterns" value="Expressed in spermatocyte and 51 other cell types or tissues"/>
</dbReference>
<dbReference type="GO" id="GO:0005737">
    <property type="term" value="C:cytoplasm"/>
    <property type="evidence" value="ECO:0000250"/>
    <property type="project" value="UniProtKB"/>
</dbReference>
<dbReference type="GO" id="GO:0005730">
    <property type="term" value="C:nucleolus"/>
    <property type="evidence" value="ECO:0000250"/>
    <property type="project" value="UniProtKB"/>
</dbReference>
<dbReference type="GO" id="GO:0002437">
    <property type="term" value="P:inflammatory response to antigenic stimulus"/>
    <property type="evidence" value="ECO:0000250"/>
    <property type="project" value="UniProtKB"/>
</dbReference>
<dbReference type="InterPro" id="IPR026523">
    <property type="entry name" value="PNMA"/>
</dbReference>
<dbReference type="InterPro" id="IPR048270">
    <property type="entry name" value="PNMA_C"/>
</dbReference>
<dbReference type="InterPro" id="IPR048271">
    <property type="entry name" value="PNMA_N"/>
</dbReference>
<dbReference type="PANTHER" id="PTHR23095">
    <property type="entry name" value="PARANEOPLASTIC ANTIGEN"/>
    <property type="match status" value="1"/>
</dbReference>
<dbReference type="PANTHER" id="PTHR23095:SF17">
    <property type="entry name" value="PARANEOPLASTIC ANTIGEN MA1"/>
    <property type="match status" value="1"/>
</dbReference>
<dbReference type="Pfam" id="PF14893">
    <property type="entry name" value="PNMA"/>
    <property type="match status" value="1"/>
</dbReference>
<dbReference type="Pfam" id="PF20846">
    <property type="entry name" value="PNMA_N"/>
    <property type="match status" value="1"/>
</dbReference>
<protein>
    <recommendedName>
        <fullName>Paraneoplastic antigen Ma1 homolog</fullName>
    </recommendedName>
</protein>
<keyword id="KW-0539">Nucleus</keyword>
<keyword id="KW-1185">Reference proteome</keyword>
<gene>
    <name type="primary">Pnma1</name>
    <name type="synonym">Ma1</name>
</gene>
<reference key="1">
    <citation type="journal article" date="2005" name="Science">
        <title>The transcriptional landscape of the mammalian genome.</title>
        <authorList>
            <person name="Carninci P."/>
            <person name="Kasukawa T."/>
            <person name="Katayama S."/>
            <person name="Gough J."/>
            <person name="Frith M.C."/>
            <person name="Maeda N."/>
            <person name="Oyama R."/>
            <person name="Ravasi T."/>
            <person name="Lenhard B."/>
            <person name="Wells C."/>
            <person name="Kodzius R."/>
            <person name="Shimokawa K."/>
            <person name="Bajic V.B."/>
            <person name="Brenner S.E."/>
            <person name="Batalov S."/>
            <person name="Forrest A.R."/>
            <person name="Zavolan M."/>
            <person name="Davis M.J."/>
            <person name="Wilming L.G."/>
            <person name="Aidinis V."/>
            <person name="Allen J.E."/>
            <person name="Ambesi-Impiombato A."/>
            <person name="Apweiler R."/>
            <person name="Aturaliya R.N."/>
            <person name="Bailey T.L."/>
            <person name="Bansal M."/>
            <person name="Baxter L."/>
            <person name="Beisel K.W."/>
            <person name="Bersano T."/>
            <person name="Bono H."/>
            <person name="Chalk A.M."/>
            <person name="Chiu K.P."/>
            <person name="Choudhary V."/>
            <person name="Christoffels A."/>
            <person name="Clutterbuck D.R."/>
            <person name="Crowe M.L."/>
            <person name="Dalla E."/>
            <person name="Dalrymple B.P."/>
            <person name="de Bono B."/>
            <person name="Della Gatta G."/>
            <person name="di Bernardo D."/>
            <person name="Down T."/>
            <person name="Engstrom P."/>
            <person name="Fagiolini M."/>
            <person name="Faulkner G."/>
            <person name="Fletcher C.F."/>
            <person name="Fukushima T."/>
            <person name="Furuno M."/>
            <person name="Futaki S."/>
            <person name="Gariboldi M."/>
            <person name="Georgii-Hemming P."/>
            <person name="Gingeras T.R."/>
            <person name="Gojobori T."/>
            <person name="Green R.E."/>
            <person name="Gustincich S."/>
            <person name="Harbers M."/>
            <person name="Hayashi Y."/>
            <person name="Hensch T.K."/>
            <person name="Hirokawa N."/>
            <person name="Hill D."/>
            <person name="Huminiecki L."/>
            <person name="Iacono M."/>
            <person name="Ikeo K."/>
            <person name="Iwama A."/>
            <person name="Ishikawa T."/>
            <person name="Jakt M."/>
            <person name="Kanapin A."/>
            <person name="Katoh M."/>
            <person name="Kawasawa Y."/>
            <person name="Kelso J."/>
            <person name="Kitamura H."/>
            <person name="Kitano H."/>
            <person name="Kollias G."/>
            <person name="Krishnan S.P."/>
            <person name="Kruger A."/>
            <person name="Kummerfeld S.K."/>
            <person name="Kurochkin I.V."/>
            <person name="Lareau L.F."/>
            <person name="Lazarevic D."/>
            <person name="Lipovich L."/>
            <person name="Liu J."/>
            <person name="Liuni S."/>
            <person name="McWilliam S."/>
            <person name="Madan Babu M."/>
            <person name="Madera M."/>
            <person name="Marchionni L."/>
            <person name="Matsuda H."/>
            <person name="Matsuzawa S."/>
            <person name="Miki H."/>
            <person name="Mignone F."/>
            <person name="Miyake S."/>
            <person name="Morris K."/>
            <person name="Mottagui-Tabar S."/>
            <person name="Mulder N."/>
            <person name="Nakano N."/>
            <person name="Nakauchi H."/>
            <person name="Ng P."/>
            <person name="Nilsson R."/>
            <person name="Nishiguchi S."/>
            <person name="Nishikawa S."/>
            <person name="Nori F."/>
            <person name="Ohara O."/>
            <person name="Okazaki Y."/>
            <person name="Orlando V."/>
            <person name="Pang K.C."/>
            <person name="Pavan W.J."/>
            <person name="Pavesi G."/>
            <person name="Pesole G."/>
            <person name="Petrovsky N."/>
            <person name="Piazza S."/>
            <person name="Reed J."/>
            <person name="Reid J.F."/>
            <person name="Ring B.Z."/>
            <person name="Ringwald M."/>
            <person name="Rost B."/>
            <person name="Ruan Y."/>
            <person name="Salzberg S.L."/>
            <person name="Sandelin A."/>
            <person name="Schneider C."/>
            <person name="Schoenbach C."/>
            <person name="Sekiguchi K."/>
            <person name="Semple C.A."/>
            <person name="Seno S."/>
            <person name="Sessa L."/>
            <person name="Sheng Y."/>
            <person name="Shibata Y."/>
            <person name="Shimada H."/>
            <person name="Shimada K."/>
            <person name="Silva D."/>
            <person name="Sinclair B."/>
            <person name="Sperling S."/>
            <person name="Stupka E."/>
            <person name="Sugiura K."/>
            <person name="Sultana R."/>
            <person name="Takenaka Y."/>
            <person name="Taki K."/>
            <person name="Tammoja K."/>
            <person name="Tan S.L."/>
            <person name="Tang S."/>
            <person name="Taylor M.S."/>
            <person name="Tegner J."/>
            <person name="Teichmann S.A."/>
            <person name="Ueda H.R."/>
            <person name="van Nimwegen E."/>
            <person name="Verardo R."/>
            <person name="Wei C.L."/>
            <person name="Yagi K."/>
            <person name="Yamanishi H."/>
            <person name="Zabarovsky E."/>
            <person name="Zhu S."/>
            <person name="Zimmer A."/>
            <person name="Hide W."/>
            <person name="Bult C."/>
            <person name="Grimmond S.M."/>
            <person name="Teasdale R.D."/>
            <person name="Liu E.T."/>
            <person name="Brusic V."/>
            <person name="Quackenbush J."/>
            <person name="Wahlestedt C."/>
            <person name="Mattick J.S."/>
            <person name="Hume D.A."/>
            <person name="Kai C."/>
            <person name="Sasaki D."/>
            <person name="Tomaru Y."/>
            <person name="Fukuda S."/>
            <person name="Kanamori-Katayama M."/>
            <person name="Suzuki M."/>
            <person name="Aoki J."/>
            <person name="Arakawa T."/>
            <person name="Iida J."/>
            <person name="Imamura K."/>
            <person name="Itoh M."/>
            <person name="Kato T."/>
            <person name="Kawaji H."/>
            <person name="Kawagashira N."/>
            <person name="Kawashima T."/>
            <person name="Kojima M."/>
            <person name="Kondo S."/>
            <person name="Konno H."/>
            <person name="Nakano K."/>
            <person name="Ninomiya N."/>
            <person name="Nishio T."/>
            <person name="Okada M."/>
            <person name="Plessy C."/>
            <person name="Shibata K."/>
            <person name="Shiraki T."/>
            <person name="Suzuki S."/>
            <person name="Tagami M."/>
            <person name="Waki K."/>
            <person name="Watahiki A."/>
            <person name="Okamura-Oho Y."/>
            <person name="Suzuki H."/>
            <person name="Kawai J."/>
            <person name="Hayashizaki Y."/>
        </authorList>
    </citation>
    <scope>NUCLEOTIDE SEQUENCE [LARGE SCALE MRNA]</scope>
    <source>
        <strain>C57BL/6J</strain>
        <tissue>Brain</tissue>
        <tissue>Diencephalon</tissue>
        <tissue>Embryo</tissue>
    </source>
</reference>
<reference key="2">
    <citation type="submission" date="2005-07" db="EMBL/GenBank/DDBJ databases">
        <authorList>
            <person name="Mural R.J."/>
            <person name="Adams M.D."/>
            <person name="Myers E.W."/>
            <person name="Smith H.O."/>
            <person name="Venter J.C."/>
        </authorList>
    </citation>
    <scope>NUCLEOTIDE SEQUENCE [LARGE SCALE GENOMIC DNA]</scope>
</reference>
<reference key="3">
    <citation type="journal article" date="2004" name="Genome Res.">
        <title>The status, quality, and expansion of the NIH full-length cDNA project: the Mammalian Gene Collection (MGC).</title>
        <authorList>
            <consortium name="The MGC Project Team"/>
        </authorList>
    </citation>
    <scope>NUCLEOTIDE SEQUENCE [LARGE SCALE MRNA]</scope>
</reference>
<reference key="4">
    <citation type="journal article" date="2009" name="Cereb. Cortex">
        <title>Paraneoplastic antigen-like 5 gene (PNMA5) is preferentially expressed in the association areas in a primate specific manner.</title>
        <authorList>
            <person name="Takaji M."/>
            <person name="Komatsu Y."/>
            <person name="Watakabe A."/>
            <person name="Hashikawa T."/>
            <person name="Yamamori T."/>
        </authorList>
    </citation>
    <scope>TISSUE SPECIFICITY</scope>
</reference>
<reference key="5">
    <citation type="journal article" date="2010" name="Cell">
        <title>A tissue-specific atlas of mouse protein phosphorylation and expression.</title>
        <authorList>
            <person name="Huttlin E.L."/>
            <person name="Jedrychowski M.P."/>
            <person name="Elias J.E."/>
            <person name="Goswami T."/>
            <person name="Rad R."/>
            <person name="Beausoleil S.A."/>
            <person name="Villen J."/>
            <person name="Haas W."/>
            <person name="Sowa M.E."/>
            <person name="Gygi S.P."/>
        </authorList>
    </citation>
    <scope>IDENTIFICATION BY MASS SPECTROMETRY [LARGE SCALE ANALYSIS]</scope>
    <source>
        <tissue>Testis</tissue>
    </source>
</reference>
<accession>Q8C1C8</accession>
<accession>Q3UVU2</accession>
<accession>Q9CYP2</accession>
<evidence type="ECO:0000250" key="1"/>
<evidence type="ECO:0000269" key="2">
    <source>
    </source>
</evidence>
<evidence type="ECO:0000305" key="3"/>
<organism>
    <name type="scientific">Mus musculus</name>
    <name type="common">Mouse</name>
    <dbReference type="NCBI Taxonomy" id="10090"/>
    <lineage>
        <taxon>Eukaryota</taxon>
        <taxon>Metazoa</taxon>
        <taxon>Chordata</taxon>
        <taxon>Craniata</taxon>
        <taxon>Vertebrata</taxon>
        <taxon>Euteleostomi</taxon>
        <taxon>Mammalia</taxon>
        <taxon>Eutheria</taxon>
        <taxon>Euarchontoglires</taxon>
        <taxon>Glires</taxon>
        <taxon>Rodentia</taxon>
        <taxon>Myomorpha</taxon>
        <taxon>Muroidea</taxon>
        <taxon>Muridae</taxon>
        <taxon>Murinae</taxon>
        <taxon>Mus</taxon>
        <taxon>Mus</taxon>
    </lineage>
</organism>
<feature type="chain" id="PRO_0000155200" description="Paraneoplastic antigen Ma1 homolog">
    <location>
        <begin position="1"/>
        <end position="353"/>
    </location>
</feature>
<feature type="sequence conflict" description="In Ref. 1; BAC25885." evidence="3" ref="1">
    <original>M</original>
    <variation>T</variation>
    <location>
        <position position="136"/>
    </location>
</feature>